<reference key="1">
    <citation type="journal article" date="2005" name="PLoS Biol.">
        <title>Major structural differences and novel potential virulence mechanisms from the genomes of multiple Campylobacter species.</title>
        <authorList>
            <person name="Fouts D.E."/>
            <person name="Mongodin E.F."/>
            <person name="Mandrell R.E."/>
            <person name="Miller W.G."/>
            <person name="Rasko D.A."/>
            <person name="Ravel J."/>
            <person name="Brinkac L.M."/>
            <person name="DeBoy R.T."/>
            <person name="Parker C.T."/>
            <person name="Daugherty S.C."/>
            <person name="Dodson R.J."/>
            <person name="Durkin A.S."/>
            <person name="Madupu R."/>
            <person name="Sullivan S.A."/>
            <person name="Shetty J.U."/>
            <person name="Ayodeji M.A."/>
            <person name="Shvartsbeyn A."/>
            <person name="Schatz M.C."/>
            <person name="Badger J.H."/>
            <person name="Fraser C.M."/>
            <person name="Nelson K.E."/>
        </authorList>
    </citation>
    <scope>NUCLEOTIDE SEQUENCE [LARGE SCALE GENOMIC DNA]</scope>
    <source>
        <strain>RM1221</strain>
    </source>
</reference>
<feature type="chain" id="PRO_0000167339" description="UPF0102 protein CJE0144">
    <location>
        <begin position="1"/>
        <end position="112"/>
    </location>
</feature>
<gene>
    <name type="ordered locus">CJE0144</name>
</gene>
<comment type="similarity">
    <text evidence="1">Belongs to the UPF0102 family.</text>
</comment>
<name>Y144_CAMJR</name>
<dbReference type="EMBL" id="CP000025">
    <property type="protein sequence ID" value="AAW34739.1"/>
    <property type="molecule type" value="Genomic_DNA"/>
</dbReference>
<dbReference type="RefSeq" id="WP_002851874.1">
    <property type="nucleotide sequence ID" value="NC_003912.7"/>
</dbReference>
<dbReference type="SMR" id="Q5HX17"/>
<dbReference type="DNASU" id="3230907"/>
<dbReference type="KEGG" id="cjr:CJE0144"/>
<dbReference type="HOGENOM" id="CLU_115353_3_2_7"/>
<dbReference type="GO" id="GO:0003676">
    <property type="term" value="F:nucleic acid binding"/>
    <property type="evidence" value="ECO:0007669"/>
    <property type="project" value="InterPro"/>
</dbReference>
<dbReference type="Gene3D" id="3.40.1350.10">
    <property type="match status" value="1"/>
</dbReference>
<dbReference type="HAMAP" id="MF_00048">
    <property type="entry name" value="UPF0102"/>
    <property type="match status" value="1"/>
</dbReference>
<dbReference type="InterPro" id="IPR011335">
    <property type="entry name" value="Restrct_endonuc-II-like"/>
</dbReference>
<dbReference type="InterPro" id="IPR011856">
    <property type="entry name" value="tRNA_endonuc-like_dom_sf"/>
</dbReference>
<dbReference type="InterPro" id="IPR003509">
    <property type="entry name" value="UPF0102_YraN-like"/>
</dbReference>
<dbReference type="NCBIfam" id="NF009152">
    <property type="entry name" value="PRK12497.2-4"/>
    <property type="match status" value="1"/>
</dbReference>
<dbReference type="PANTHER" id="PTHR34039">
    <property type="entry name" value="UPF0102 PROTEIN YRAN"/>
    <property type="match status" value="1"/>
</dbReference>
<dbReference type="PANTHER" id="PTHR34039:SF1">
    <property type="entry name" value="UPF0102 PROTEIN YRAN"/>
    <property type="match status" value="1"/>
</dbReference>
<dbReference type="Pfam" id="PF02021">
    <property type="entry name" value="UPF0102"/>
    <property type="match status" value="1"/>
</dbReference>
<dbReference type="SUPFAM" id="SSF52980">
    <property type="entry name" value="Restriction endonuclease-like"/>
    <property type="match status" value="1"/>
</dbReference>
<protein>
    <recommendedName>
        <fullName evidence="1">UPF0102 protein CJE0144</fullName>
    </recommendedName>
</protein>
<evidence type="ECO:0000255" key="1">
    <source>
        <dbReference type="HAMAP-Rule" id="MF_00048"/>
    </source>
</evidence>
<accession>Q5HX17</accession>
<sequence length="112" mass="13179">MGVKAYLDGILGEDKACKFLKKQGFEILKRNFHSKFGEIDIIAKKDEILHFIEVKFTQNDYEVSERLDRKKLEKILKTIEFYHLKNGISSDFQIDLICIKNDVIQFCENISF</sequence>
<organism>
    <name type="scientific">Campylobacter jejuni (strain RM1221)</name>
    <dbReference type="NCBI Taxonomy" id="195099"/>
    <lineage>
        <taxon>Bacteria</taxon>
        <taxon>Pseudomonadati</taxon>
        <taxon>Campylobacterota</taxon>
        <taxon>Epsilonproteobacteria</taxon>
        <taxon>Campylobacterales</taxon>
        <taxon>Campylobacteraceae</taxon>
        <taxon>Campylobacter</taxon>
    </lineage>
</organism>
<proteinExistence type="inferred from homology"/>